<proteinExistence type="evidence at protein level"/>
<keyword id="KW-0027">Amidation</keyword>
<keyword id="KW-0903">Direct protein sequencing</keyword>
<keyword id="KW-0964">Secreted</keyword>
<protein>
    <recommendedName>
        <fullName evidence="2">Cryptide Pep-21</fullName>
    </recommendedName>
</protein>
<organism>
    <name type="scientific">Tityus obscurus</name>
    <name type="common">Amazonian scorpion</name>
    <name type="synonym">Tityus cambridgei</name>
    <dbReference type="NCBI Taxonomy" id="1221240"/>
    <lineage>
        <taxon>Eukaryota</taxon>
        <taxon>Metazoa</taxon>
        <taxon>Ecdysozoa</taxon>
        <taxon>Arthropoda</taxon>
        <taxon>Chelicerata</taxon>
        <taxon>Arachnida</taxon>
        <taxon>Scorpiones</taxon>
        <taxon>Buthida</taxon>
        <taxon>Buthoidea</taxon>
        <taxon>Buthidae</taxon>
        <taxon>Tityus</taxon>
    </lineage>
</organism>
<accession>P0DRG6</accession>
<evidence type="ECO:0000269" key="1">
    <source>
    </source>
</evidence>
<evidence type="ECO:0000303" key="2">
    <source>
    </source>
</evidence>
<evidence type="ECO:0000305" key="3">
    <source>
    </source>
</evidence>
<dbReference type="GO" id="GO:0005576">
    <property type="term" value="C:extracellular region"/>
    <property type="evidence" value="ECO:0007669"/>
    <property type="project" value="UniProtKB-SubCell"/>
</dbReference>
<feature type="peptide" id="PRO_0000461756" description="Cryptide Pep-21" evidence="1">
    <location>
        <begin position="1"/>
        <end position="7"/>
    </location>
</feature>
<feature type="modified residue" description="Methionine amide" evidence="1">
    <location>
        <position position="7"/>
    </location>
</feature>
<reference key="1">
    <citation type="journal article" date="2018" name="J. Proteomics">
        <title>Profiling the short, linear, non-disulfide bond-containing peptidome from the venom of the scorpion Tityus obscurus.</title>
        <authorList>
            <person name="Dias N.B."/>
            <person name="de Souza B.M."/>
            <person name="Cocchi F.K."/>
            <person name="Chalkidis H.M."/>
            <person name="Dorce V.A.C."/>
            <person name="Palma M.S."/>
        </authorList>
    </citation>
    <scope>PROTEIN SEQUENCE</scope>
    <scope>IDENTIFICATION BY MASS SPECTROMETRY</scope>
    <scope>MASS SPECTROMETRY</scope>
    <scope>SUBCELLULAR LOCATION</scope>
    <scope>AMIDATION AT MET-7</scope>
    <source>
        <tissue>Venom</tissue>
    </source>
</reference>
<sequence length="7" mass="804">TVPDLEM</sequence>
<comment type="subcellular location">
    <subcellularLocation>
        <location evidence="1">Secreted</location>
    </subcellularLocation>
</comment>
<comment type="tissue specificity">
    <text evidence="3">Expressed by the venom gland.</text>
</comment>
<comment type="mass spectrometry" mass="802.52" method="Electrospray" evidence="1"/>
<name>CRY21_TITOB</name>